<sequence>MSWLNSVLLALTSVQPYMVPATVIGLVSFAFLCFIFFYFFRAVKIINGLKKYTQSINGIENNEPGNQLQHLQSLFVQPELKHAWNEFEESLHSQYELEDGEEKIVRIRATAPSASFFSEQQLVDIPLNTEFFKHLPGILTGVGIIGTFYGLMIGLNHFDPSTPEQVSSSVNNLLRDVLYAFLGSAFAITFSILITWLEKFCLAKCYKYLEKFTAALDALYDSGVGEEYLASLVKSSNESATQARHLKESLVTDLRDMLLHLANSQKVENERLATTLSTTYRETGQQFAEQVSGAIENSLKSPLDKIAGAVQTASGDQSGMVQNMLQDVLTAFMAKLDTTFGQQFTNLNEMMGQTVGAIQTMQTGFGALLQDMRQVSDDSRQGSAQLIEQLLSEMKSGQQAMQAGMNDMLTSLQTSVAKIGAEGEGAGERMARQLEKMFADSEAREKAQAEHMTAFIEAIQNSVQQGQSATMEKMAASVESLGEQLGSLFGQIDKGQQQISANQQANQQSLHEQTQRVMSEVDDQIKQLVETVASQHQGTTETLRLLAEQTNRQIQDMHTGADKMRLAAERFEHAGDRVSEANHLTADVLNKAQSAGSSLSLATSELTSVVADYRNNREAVSKSIAMLELLAANTQSEQTTRTQFIADLKQHGERLQSYNREAQAFMENVSDVLGKGFEDFSEGVSRSLDKTLGKLDVEMAKASTLLAGSVEQIGESVSELDDVLSRVRA</sequence>
<keyword id="KW-0002">3D-structure</keyword>
<keyword id="KW-0051">Antiviral defense</keyword>
<keyword id="KW-0997">Cell inner membrane</keyword>
<keyword id="KW-1003">Cell membrane</keyword>
<keyword id="KW-0472">Membrane</keyword>
<keyword id="KW-1185">Reference proteome</keyword>
<keyword id="KW-0812">Transmembrane</keyword>
<keyword id="KW-1133">Transmembrane helix</keyword>
<name>ZORA_ECO24</name>
<gene>
    <name evidence="3" type="primary">zorA</name>
    <name evidence="5" type="ordered locus">EcE24377A_0285</name>
</gene>
<comment type="function">
    <text evidence="2 4">Component of antiviral defense system Zorya type I, composed of ZorA, ZorB, ZorC and ZorD. Expression of Zorya type I in E.coli (strain MG1655) confers 10,000-fold resistance to phage SECphi27, 100-fold resistance to lambda, and 10-fold resistance to T7. While most T7 infected Zorya-containing cells undergo abortive infection, a minority produce viable phage progeny. These eventually accumulate to a high multiplicity of infection, leading to culture collapse by 2 hours after initial infection (PubMed:29371424). ZorA and ZorB probably assemble in the cell inner membrane and exert their effect there (Probable).</text>
</comment>
<comment type="subcellular location">
    <subcellularLocation>
        <location evidence="4">Cell inner membrane</location>
        <topology evidence="1">Multi-pass membrane protein</topology>
    </subcellularLocation>
</comment>
<comment type="disruption phenotype">
    <text evidence="2">When this gene is missing the Zorya system does not confer resistance to SECphi27 in E.coli.</text>
</comment>
<comment type="similarity">
    <text evidence="4">Belongs to the MotA family.</text>
</comment>
<comment type="sequence caution" evidence="4">
    <conflict type="erroneous initiation">
        <sequence resource="EMBL-CDS" id="ABV17222"/>
    </conflict>
    <text>Extended N-terminus.</text>
</comment>
<proteinExistence type="evidence at protein level"/>
<dbReference type="EMBL" id="CP000800">
    <property type="protein sequence ID" value="ABV17222.1"/>
    <property type="status" value="ALT_INIT"/>
    <property type="molecule type" value="Genomic_DNA"/>
</dbReference>
<dbReference type="PDB" id="8QYD">
    <property type="method" value="EM"/>
    <property type="resolution" value="2.67 A"/>
    <property type="chains" value="A/B/C/D/E=1-728"/>
</dbReference>
<dbReference type="PDB" id="8QYH">
    <property type="method" value="EM"/>
    <property type="resolution" value="2.40 A"/>
    <property type="chains" value="A/B/C/D/E=1-273"/>
</dbReference>
<dbReference type="PDB" id="8QYK">
    <property type="method" value="EM"/>
    <property type="resolution" value="2.07 A"/>
    <property type="chains" value="A/B/C/D/E=1-359"/>
</dbReference>
<dbReference type="PDB" id="8QYY">
    <property type="method" value="EM"/>
    <property type="resolution" value="2.56 A"/>
    <property type="chains" value="A/B/C/D/E=1-434"/>
</dbReference>
<dbReference type="PDBsum" id="8QYD"/>
<dbReference type="PDBsum" id="8QYH"/>
<dbReference type="PDBsum" id="8QYK"/>
<dbReference type="PDBsum" id="8QYY"/>
<dbReference type="SMR" id="A7ZI10"/>
<dbReference type="KEGG" id="ecw:EcE24377A_0285"/>
<dbReference type="HOGENOM" id="CLU_022865_0_0_6"/>
<dbReference type="Proteomes" id="UP000001122">
    <property type="component" value="Chromosome"/>
</dbReference>
<dbReference type="GO" id="GO:0005886">
    <property type="term" value="C:plasma membrane"/>
    <property type="evidence" value="ECO:0007669"/>
    <property type="project" value="UniProtKB-SubCell"/>
</dbReference>
<dbReference type="GO" id="GO:0051607">
    <property type="term" value="P:defense response to virus"/>
    <property type="evidence" value="ECO:0007669"/>
    <property type="project" value="UniProtKB-KW"/>
</dbReference>
<dbReference type="InterPro" id="IPR016024">
    <property type="entry name" value="ARM-type_fold"/>
</dbReference>
<dbReference type="InterPro" id="IPR049670">
    <property type="entry name" value="ZorA-like_t1"/>
</dbReference>
<dbReference type="NCBIfam" id="NF041794">
    <property type="entry name" value="1_anti-phage_ZorA1"/>
    <property type="match status" value="1"/>
</dbReference>
<dbReference type="NCBIfam" id="NF033916">
    <property type="entry name" value="antiphage_ZorA_3"/>
    <property type="match status" value="1"/>
</dbReference>
<dbReference type="SUPFAM" id="SSF48371">
    <property type="entry name" value="ARM repeat"/>
    <property type="match status" value="1"/>
</dbReference>
<protein>
    <recommendedName>
        <fullName evidence="3">Zorya protein ZorA</fullName>
    </recommendedName>
</protein>
<feature type="chain" id="PRO_0000456338" description="Zorya protein ZorA">
    <location>
        <begin position="1"/>
        <end position="729"/>
    </location>
</feature>
<feature type="transmembrane region" description="Helical" evidence="1">
    <location>
        <begin position="20"/>
        <end position="40"/>
    </location>
</feature>
<feature type="transmembrane region" description="Helical" evidence="1">
    <location>
        <begin position="135"/>
        <end position="155"/>
    </location>
</feature>
<feature type="transmembrane region" description="Helical" evidence="1">
    <location>
        <begin position="177"/>
        <end position="197"/>
    </location>
</feature>
<feature type="mutagenesis site" description="No longer resistant to SECphi27; when associated with A-184." evidence="2">
    <original>T</original>
    <variation>A</variation>
    <location>
        <position position="147"/>
    </location>
</feature>
<feature type="mutagenesis site" description="No longer resistant to SECphi27; when associated with A-147." evidence="2">
    <original>S</original>
    <variation>A</variation>
    <location>
        <position position="184"/>
    </location>
</feature>
<feature type="helix" evidence="6">
    <location>
        <begin position="2"/>
        <end position="12"/>
    </location>
</feature>
<feature type="helix" evidence="6">
    <location>
        <begin position="18"/>
        <end position="37"/>
    </location>
</feature>
<feature type="helix" evidence="6">
    <location>
        <begin position="39"/>
        <end position="57"/>
    </location>
</feature>
<feature type="turn" evidence="6">
    <location>
        <begin position="58"/>
        <end position="61"/>
    </location>
</feature>
<feature type="helix" evidence="6">
    <location>
        <begin position="64"/>
        <end position="74"/>
    </location>
</feature>
<feature type="helix" evidence="6">
    <location>
        <begin position="78"/>
        <end position="90"/>
    </location>
</feature>
<feature type="strand" evidence="6">
    <location>
        <begin position="92"/>
        <end position="98"/>
    </location>
</feature>
<feature type="strand" evidence="6">
    <location>
        <begin position="101"/>
        <end position="108"/>
    </location>
</feature>
<feature type="helix" evidence="6">
    <location>
        <begin position="113"/>
        <end position="115"/>
    </location>
</feature>
<feature type="helix" evidence="6">
    <location>
        <begin position="119"/>
        <end position="122"/>
    </location>
</feature>
<feature type="turn" evidence="6">
    <location>
        <begin position="123"/>
        <end position="128"/>
    </location>
</feature>
<feature type="helix" evidence="6">
    <location>
        <begin position="129"/>
        <end position="132"/>
    </location>
</feature>
<feature type="helix" evidence="6">
    <location>
        <begin position="135"/>
        <end position="157"/>
    </location>
</feature>
<feature type="helix" evidence="6">
    <location>
        <begin position="163"/>
        <end position="165"/>
    </location>
</feature>
<feature type="helix" evidence="6">
    <location>
        <begin position="166"/>
        <end position="217"/>
    </location>
</feature>
<feature type="helix" evidence="6">
    <location>
        <begin position="224"/>
        <end position="264"/>
    </location>
</feature>
<reference evidence="5" key="1">
    <citation type="journal article" date="2008" name="J. Bacteriol.">
        <title>The pangenome structure of Escherichia coli: comparative genomic analysis of E. coli commensal and pathogenic isolates.</title>
        <authorList>
            <person name="Rasko D.A."/>
            <person name="Rosovitz M.J."/>
            <person name="Myers G.S.A."/>
            <person name="Mongodin E.F."/>
            <person name="Fricke W.F."/>
            <person name="Gajer P."/>
            <person name="Crabtree J."/>
            <person name="Sebaihia M."/>
            <person name="Thomson N.R."/>
            <person name="Chaudhuri R."/>
            <person name="Henderson I.R."/>
            <person name="Sperandio V."/>
            <person name="Ravel J."/>
        </authorList>
    </citation>
    <scope>NUCLEOTIDE SEQUENCE [LARGE SCALE GENOMIC DNA]</scope>
    <source>
        <strain>E24377A / ETEC</strain>
    </source>
</reference>
<reference key="2">
    <citation type="journal article" date="2018" name="Science">
        <title>Systematic discovery of antiphage defense systems in the microbial pangenome.</title>
        <authorList>
            <person name="Doron S."/>
            <person name="Melamed S."/>
            <person name="Ofir G."/>
            <person name="Leavitt A."/>
            <person name="Lopatina A."/>
            <person name="Keren M."/>
            <person name="Amitai G."/>
            <person name="Sorek R."/>
        </authorList>
    </citation>
    <scope>FUNCTION</scope>
    <scope>SUBCELLULAR LOCATION</scope>
    <scope>DISRUPTION PHENOTYPE</scope>
    <scope>MUTAGENESIS OF THR-147 AND SER-184</scope>
    <source>
        <strain>E24377A / ETEC</strain>
    </source>
</reference>
<organism>
    <name type="scientific">Escherichia coli O139:H28 (strain E24377A / ETEC)</name>
    <dbReference type="NCBI Taxonomy" id="331111"/>
    <lineage>
        <taxon>Bacteria</taxon>
        <taxon>Pseudomonadati</taxon>
        <taxon>Pseudomonadota</taxon>
        <taxon>Gammaproteobacteria</taxon>
        <taxon>Enterobacterales</taxon>
        <taxon>Enterobacteriaceae</taxon>
        <taxon>Escherichia</taxon>
    </lineage>
</organism>
<evidence type="ECO:0000255" key="1"/>
<evidence type="ECO:0000269" key="2">
    <source>
    </source>
</evidence>
<evidence type="ECO:0000303" key="3">
    <source>
    </source>
</evidence>
<evidence type="ECO:0000305" key="4">
    <source>
    </source>
</evidence>
<evidence type="ECO:0000312" key="5">
    <source>
        <dbReference type="EMBL" id="ABV17222.1"/>
    </source>
</evidence>
<evidence type="ECO:0007829" key="6">
    <source>
        <dbReference type="PDB" id="8QYK"/>
    </source>
</evidence>
<accession>A7ZI10</accession>